<gene>
    <name evidence="1" type="primary">purL</name>
    <name type="ordered locus">MA_4055</name>
</gene>
<dbReference type="EC" id="6.3.5.3" evidence="1"/>
<dbReference type="EMBL" id="AE010299">
    <property type="protein sequence ID" value="AAM07403.1"/>
    <property type="molecule type" value="Genomic_DNA"/>
</dbReference>
<dbReference type="RefSeq" id="WP_011023948.1">
    <property type="nucleotide sequence ID" value="NC_003552.1"/>
</dbReference>
<dbReference type="SMR" id="Q8TIT6"/>
<dbReference type="FunCoup" id="Q8TIT6">
    <property type="interactions" value="228"/>
</dbReference>
<dbReference type="STRING" id="188937.MA_4055"/>
<dbReference type="EnsemblBacteria" id="AAM07403">
    <property type="protein sequence ID" value="AAM07403"/>
    <property type="gene ID" value="MA_4055"/>
</dbReference>
<dbReference type="GeneID" id="1475949"/>
<dbReference type="KEGG" id="mac:MA_4055"/>
<dbReference type="HOGENOM" id="CLU_003100_0_1_2"/>
<dbReference type="InParanoid" id="Q8TIT6"/>
<dbReference type="OrthoDB" id="8251at2157"/>
<dbReference type="PhylomeDB" id="Q8TIT6"/>
<dbReference type="UniPathway" id="UPA00074">
    <property type="reaction ID" value="UER00128"/>
</dbReference>
<dbReference type="Proteomes" id="UP000002487">
    <property type="component" value="Chromosome"/>
</dbReference>
<dbReference type="GO" id="GO:0005737">
    <property type="term" value="C:cytoplasm"/>
    <property type="evidence" value="ECO:0007669"/>
    <property type="project" value="UniProtKB-SubCell"/>
</dbReference>
<dbReference type="GO" id="GO:0005524">
    <property type="term" value="F:ATP binding"/>
    <property type="evidence" value="ECO:0007669"/>
    <property type="project" value="UniProtKB-UniRule"/>
</dbReference>
<dbReference type="GO" id="GO:0000287">
    <property type="term" value="F:magnesium ion binding"/>
    <property type="evidence" value="ECO:0007669"/>
    <property type="project" value="UniProtKB-UniRule"/>
</dbReference>
<dbReference type="GO" id="GO:0004642">
    <property type="term" value="F:phosphoribosylformylglycinamidine synthase activity"/>
    <property type="evidence" value="ECO:0000318"/>
    <property type="project" value="GO_Central"/>
</dbReference>
<dbReference type="GO" id="GO:0006189">
    <property type="term" value="P:'de novo' IMP biosynthetic process"/>
    <property type="evidence" value="ECO:0007669"/>
    <property type="project" value="UniProtKB-UniRule"/>
</dbReference>
<dbReference type="GO" id="GO:0006164">
    <property type="term" value="P:purine nucleotide biosynthetic process"/>
    <property type="evidence" value="ECO:0000318"/>
    <property type="project" value="GO_Central"/>
</dbReference>
<dbReference type="CDD" id="cd02203">
    <property type="entry name" value="PurL_repeat1"/>
    <property type="match status" value="1"/>
</dbReference>
<dbReference type="CDD" id="cd02204">
    <property type="entry name" value="PurL_repeat2"/>
    <property type="match status" value="1"/>
</dbReference>
<dbReference type="FunFam" id="3.30.1330.10:FF:000004">
    <property type="entry name" value="Phosphoribosylformylglycinamidine synthase subunit PurL"/>
    <property type="match status" value="1"/>
</dbReference>
<dbReference type="Gene3D" id="3.90.650.10">
    <property type="entry name" value="PurM-like C-terminal domain"/>
    <property type="match status" value="2"/>
</dbReference>
<dbReference type="Gene3D" id="3.30.1330.10">
    <property type="entry name" value="PurM-like, N-terminal domain"/>
    <property type="match status" value="2"/>
</dbReference>
<dbReference type="HAMAP" id="MF_00420">
    <property type="entry name" value="PurL_2"/>
    <property type="match status" value="1"/>
</dbReference>
<dbReference type="InterPro" id="IPR010074">
    <property type="entry name" value="PRibForGlyAmidine_synth_PurL"/>
</dbReference>
<dbReference type="InterPro" id="IPR041609">
    <property type="entry name" value="PurL_linker"/>
</dbReference>
<dbReference type="InterPro" id="IPR010918">
    <property type="entry name" value="PurM-like_C_dom"/>
</dbReference>
<dbReference type="InterPro" id="IPR036676">
    <property type="entry name" value="PurM-like_C_sf"/>
</dbReference>
<dbReference type="InterPro" id="IPR016188">
    <property type="entry name" value="PurM-like_N"/>
</dbReference>
<dbReference type="InterPro" id="IPR036921">
    <property type="entry name" value="PurM-like_N_sf"/>
</dbReference>
<dbReference type="NCBIfam" id="TIGR01736">
    <property type="entry name" value="FGAM_synth_II"/>
    <property type="match status" value="1"/>
</dbReference>
<dbReference type="NCBIfam" id="NF002290">
    <property type="entry name" value="PRK01213.1"/>
    <property type="match status" value="1"/>
</dbReference>
<dbReference type="PANTHER" id="PTHR43555">
    <property type="entry name" value="PHOSPHORIBOSYLFORMYLGLYCINAMIDINE SYNTHASE SUBUNIT PURL"/>
    <property type="match status" value="1"/>
</dbReference>
<dbReference type="PANTHER" id="PTHR43555:SF1">
    <property type="entry name" value="PHOSPHORIBOSYLFORMYLGLYCINAMIDINE SYNTHASE SUBUNIT PURL"/>
    <property type="match status" value="1"/>
</dbReference>
<dbReference type="Pfam" id="PF00586">
    <property type="entry name" value="AIRS"/>
    <property type="match status" value="2"/>
</dbReference>
<dbReference type="Pfam" id="PF02769">
    <property type="entry name" value="AIRS_C"/>
    <property type="match status" value="2"/>
</dbReference>
<dbReference type="Pfam" id="PF18072">
    <property type="entry name" value="FGAR-AT_linker"/>
    <property type="match status" value="1"/>
</dbReference>
<dbReference type="PIRSF" id="PIRSF001587">
    <property type="entry name" value="FGAM_synthase_II"/>
    <property type="match status" value="1"/>
</dbReference>
<dbReference type="SUPFAM" id="SSF56042">
    <property type="entry name" value="PurM C-terminal domain-like"/>
    <property type="match status" value="2"/>
</dbReference>
<dbReference type="SUPFAM" id="SSF55326">
    <property type="entry name" value="PurM N-terminal domain-like"/>
    <property type="match status" value="2"/>
</dbReference>
<feature type="chain" id="PRO_0000100512" description="Phosphoribosylformylglycinamidine synthase subunit PurL">
    <location>
        <begin position="1"/>
        <end position="715"/>
    </location>
</feature>
<feature type="active site" evidence="1">
    <location>
        <position position="33"/>
    </location>
</feature>
<feature type="active site" description="Proton acceptor" evidence="1">
    <location>
        <position position="79"/>
    </location>
</feature>
<feature type="binding site" evidence="1">
    <location>
        <position position="36"/>
    </location>
    <ligand>
        <name>ATP</name>
        <dbReference type="ChEBI" id="CHEBI:30616"/>
    </ligand>
</feature>
<feature type="binding site" evidence="1">
    <location>
        <position position="77"/>
    </location>
    <ligand>
        <name>Mg(2+)</name>
        <dbReference type="ChEBI" id="CHEBI:18420"/>
        <label>1</label>
    </ligand>
</feature>
<feature type="binding site" evidence="1">
    <location>
        <begin position="78"/>
        <end position="81"/>
    </location>
    <ligand>
        <name>substrate</name>
    </ligand>
</feature>
<feature type="binding site" evidence="1">
    <location>
        <position position="100"/>
    </location>
    <ligand>
        <name>substrate</name>
    </ligand>
</feature>
<feature type="binding site" evidence="1">
    <location>
        <position position="101"/>
    </location>
    <ligand>
        <name>Mg(2+)</name>
        <dbReference type="ChEBI" id="CHEBI:18420"/>
        <label>2</label>
    </ligand>
</feature>
<feature type="binding site" evidence="1">
    <location>
        <position position="225"/>
    </location>
    <ligand>
        <name>substrate</name>
    </ligand>
</feature>
<feature type="binding site" evidence="1">
    <location>
        <position position="253"/>
    </location>
    <ligand>
        <name>Mg(2+)</name>
        <dbReference type="ChEBI" id="CHEBI:18420"/>
        <label>2</label>
    </ligand>
</feature>
<feature type="binding site" evidence="1">
    <location>
        <begin position="297"/>
        <end position="299"/>
    </location>
    <ligand>
        <name>substrate</name>
    </ligand>
</feature>
<feature type="binding site" evidence="1">
    <location>
        <position position="475"/>
    </location>
    <ligand>
        <name>ATP</name>
        <dbReference type="ChEBI" id="CHEBI:30616"/>
    </ligand>
</feature>
<feature type="binding site" evidence="1">
    <location>
        <position position="512"/>
    </location>
    <ligand>
        <name>ATP</name>
        <dbReference type="ChEBI" id="CHEBI:30616"/>
    </ligand>
</feature>
<feature type="binding site" evidence="1">
    <location>
        <position position="513"/>
    </location>
    <ligand>
        <name>Mg(2+)</name>
        <dbReference type="ChEBI" id="CHEBI:18420"/>
        <label>1</label>
    </ligand>
</feature>
<feature type="binding site" evidence="1">
    <location>
        <position position="515"/>
    </location>
    <ligand>
        <name>substrate</name>
    </ligand>
</feature>
<name>PURL_METAC</name>
<protein>
    <recommendedName>
        <fullName evidence="1">Phosphoribosylformylglycinamidine synthase subunit PurL</fullName>
        <shortName evidence="1">FGAM synthase</shortName>
        <ecNumber evidence="1">6.3.5.3</ecNumber>
    </recommendedName>
    <alternativeName>
        <fullName evidence="1">Formylglycinamide ribonucleotide amidotransferase subunit II</fullName>
        <shortName evidence="1">FGAR amidotransferase II</shortName>
        <shortName evidence="1">FGAR-AT II</shortName>
    </alternativeName>
    <alternativeName>
        <fullName evidence="1">Glutamine amidotransferase PurL</fullName>
    </alternativeName>
    <alternativeName>
        <fullName evidence="1">Phosphoribosylformylglycinamidine synthase subunit II</fullName>
    </alternativeName>
</protein>
<keyword id="KW-0067">ATP-binding</keyword>
<keyword id="KW-0963">Cytoplasm</keyword>
<keyword id="KW-0436">Ligase</keyword>
<keyword id="KW-0460">Magnesium</keyword>
<keyword id="KW-0479">Metal-binding</keyword>
<keyword id="KW-0547">Nucleotide-binding</keyword>
<keyword id="KW-0658">Purine biosynthesis</keyword>
<keyword id="KW-1185">Reference proteome</keyword>
<comment type="function">
    <text evidence="1">Part of the phosphoribosylformylglycinamidine synthase complex involved in the purines biosynthetic pathway. Catalyzes the ATP-dependent conversion of formylglycinamide ribonucleotide (FGAR) and glutamine to yield formylglycinamidine ribonucleotide (FGAM) and glutamate. The FGAM synthase complex is composed of three subunits. PurQ produces an ammonia molecule by converting glutamine to glutamate. PurL transfers the ammonia molecule to FGAR to form FGAM in an ATP-dependent manner. PurS interacts with PurQ and PurL and is thought to assist in the transfer of the ammonia molecule from PurQ to PurL.</text>
</comment>
<comment type="catalytic activity">
    <reaction evidence="1">
        <text>N(2)-formyl-N(1)-(5-phospho-beta-D-ribosyl)glycinamide + L-glutamine + ATP + H2O = 2-formamido-N(1)-(5-O-phospho-beta-D-ribosyl)acetamidine + L-glutamate + ADP + phosphate + H(+)</text>
        <dbReference type="Rhea" id="RHEA:17129"/>
        <dbReference type="ChEBI" id="CHEBI:15377"/>
        <dbReference type="ChEBI" id="CHEBI:15378"/>
        <dbReference type="ChEBI" id="CHEBI:29985"/>
        <dbReference type="ChEBI" id="CHEBI:30616"/>
        <dbReference type="ChEBI" id="CHEBI:43474"/>
        <dbReference type="ChEBI" id="CHEBI:58359"/>
        <dbReference type="ChEBI" id="CHEBI:147286"/>
        <dbReference type="ChEBI" id="CHEBI:147287"/>
        <dbReference type="ChEBI" id="CHEBI:456216"/>
        <dbReference type="EC" id="6.3.5.3"/>
    </reaction>
</comment>
<comment type="pathway">
    <text evidence="1">Purine metabolism; IMP biosynthesis via de novo pathway; 5-amino-1-(5-phospho-D-ribosyl)imidazole from N(2)-formyl-N(1)-(5-phospho-D-ribosyl)glycinamide: step 1/2.</text>
</comment>
<comment type="subunit">
    <text evidence="1">Monomer. Part of the FGAM synthase complex composed of 1 PurL, 1 PurQ and 2 PurS subunits.</text>
</comment>
<comment type="subcellular location">
    <subcellularLocation>
        <location evidence="1">Cytoplasm</location>
    </subcellularLocation>
</comment>
<comment type="similarity">
    <text evidence="1">Belongs to the FGAMS family.</text>
</comment>
<reference key="1">
    <citation type="journal article" date="2002" name="Genome Res.">
        <title>The genome of Methanosarcina acetivorans reveals extensive metabolic and physiological diversity.</title>
        <authorList>
            <person name="Galagan J.E."/>
            <person name="Nusbaum C."/>
            <person name="Roy A."/>
            <person name="Endrizzi M.G."/>
            <person name="Macdonald P."/>
            <person name="FitzHugh W."/>
            <person name="Calvo S."/>
            <person name="Engels R."/>
            <person name="Smirnov S."/>
            <person name="Atnoor D."/>
            <person name="Brown A."/>
            <person name="Allen N."/>
            <person name="Naylor J."/>
            <person name="Stange-Thomann N."/>
            <person name="DeArellano K."/>
            <person name="Johnson R."/>
            <person name="Linton L."/>
            <person name="McEwan P."/>
            <person name="McKernan K."/>
            <person name="Talamas J."/>
            <person name="Tirrell A."/>
            <person name="Ye W."/>
            <person name="Zimmer A."/>
            <person name="Barber R.D."/>
            <person name="Cann I."/>
            <person name="Graham D.E."/>
            <person name="Grahame D.A."/>
            <person name="Guss A.M."/>
            <person name="Hedderich R."/>
            <person name="Ingram-Smith C."/>
            <person name="Kuettner H.C."/>
            <person name="Krzycki J.A."/>
            <person name="Leigh J.A."/>
            <person name="Li W."/>
            <person name="Liu J."/>
            <person name="Mukhopadhyay B."/>
            <person name="Reeve J.N."/>
            <person name="Smith K."/>
            <person name="Springer T.A."/>
            <person name="Umayam L.A."/>
            <person name="White O."/>
            <person name="White R.H."/>
            <person name="de Macario E.C."/>
            <person name="Ferry J.G."/>
            <person name="Jarrell K.F."/>
            <person name="Jing H."/>
            <person name="Macario A.J.L."/>
            <person name="Paulsen I.T."/>
            <person name="Pritchett M."/>
            <person name="Sowers K.R."/>
            <person name="Swanson R.V."/>
            <person name="Zinder S.H."/>
            <person name="Lander E."/>
            <person name="Metcalf W.W."/>
            <person name="Birren B."/>
        </authorList>
    </citation>
    <scope>NUCLEOTIDE SEQUENCE [LARGE SCALE GENOMIC DNA]</scope>
    <source>
        <strain>ATCC 35395 / DSM 2834 / JCM 12185 / C2A</strain>
    </source>
</reference>
<evidence type="ECO:0000255" key="1">
    <source>
        <dbReference type="HAMAP-Rule" id="MF_00420"/>
    </source>
</evidence>
<proteinExistence type="inferred from homology"/>
<organism>
    <name type="scientific">Methanosarcina acetivorans (strain ATCC 35395 / DSM 2834 / JCM 12185 / C2A)</name>
    <dbReference type="NCBI Taxonomy" id="188937"/>
    <lineage>
        <taxon>Archaea</taxon>
        <taxon>Methanobacteriati</taxon>
        <taxon>Methanobacteriota</taxon>
        <taxon>Stenosarchaea group</taxon>
        <taxon>Methanomicrobia</taxon>
        <taxon>Methanosarcinales</taxon>
        <taxon>Methanosarcinaceae</taxon>
        <taxon>Methanosarcina</taxon>
    </lineage>
</organism>
<sequence length="715" mass="76231">MLPEEDLKIIRKELGREPTLVEQGCFLNLWSEHCSYRSSAPLLKTFTSTGENVLIGPGDDAAIIKFEDGYVLAIGMESHNHPSYVDPYNGAATGIGGIVRDIISMGARPIALMDPLYFGPLDTPKNLFLFEQIIKGIAGYGNCIGVPVVNGETFFDRRYSGNPLVNVVAVGLCKEENVTTSRSQKAENKLILAGSSTGKDGLGGASFASRDLSESAEAEDRPSVQVGDPYTEKLVMEMTLEAIEKGYVKSCKDLGAAGLGGASSELAAKGGLGARIIADAVPQREPNMNAYEILLAESQERMLFEVAPEDVDAVLALVQKYDLNGAVVGYLTKEPTYTVEFGGEIVADIPIAFLTGGAPTCEKPSEAPTLREEGKKPETPEDLKVAFLKVLSSYNIASKEWIYRQYDHEVQLRTVVKPGEDSGVLRITGTKGIALTCGCQPRATLLDPYNGGKTAIIENSMNLAVKGAEPLAIVNCLNFGNPERPETYWQFENAVLGLGDEARKLSIPVVGGNVSLYNESDEFKTAIPPTPSIGMIGKVDLEIPLPSGFFAKDGDSIILVGETTPEMGGSEYYACMDSGNAGMVPAVPENAPELIKAIIEAVKSGKLSSAHDLSLGGIGAGLARMCRSMGAKVDLSELAGETQADELLFSEAPARALLAISEPEAVREILKDVPHAVIGKVGGETLEIKGKNFELSVSLKEIAEAYGSLTRFMMG</sequence>
<accession>Q8TIT6</accession>